<feature type="signal peptide" evidence="1">
    <location>
        <begin position="1"/>
        <end position="19"/>
    </location>
</feature>
<feature type="chain" id="PRO_0000018330" description="Linoleate 9/13-lipoxygenase">
    <location>
        <begin position="20"/>
        <end position="685"/>
    </location>
</feature>
<feature type="domain" description="Lipoxygenase" evidence="2">
    <location>
        <begin position="122"/>
        <end position="685"/>
    </location>
</feature>
<feature type="binding site" evidence="2">
    <location>
        <position position="377"/>
    </location>
    <ligand>
        <name>Fe cation</name>
        <dbReference type="ChEBI" id="CHEBI:24875"/>
        <note>catalytic</note>
    </ligand>
</feature>
<feature type="binding site" evidence="2">
    <location>
        <position position="382"/>
    </location>
    <ligand>
        <name>Fe cation</name>
        <dbReference type="ChEBI" id="CHEBI:24875"/>
        <note>catalytic</note>
    </ligand>
</feature>
<feature type="binding site" evidence="2">
    <location>
        <position position="555"/>
    </location>
    <ligand>
        <name>Fe cation</name>
        <dbReference type="ChEBI" id="CHEBI:24875"/>
        <note>catalytic</note>
    </ligand>
</feature>
<feature type="binding site" evidence="2">
    <location>
        <position position="559"/>
    </location>
    <ligand>
        <name>Fe cation</name>
        <dbReference type="ChEBI" id="CHEBI:24875"/>
        <note>catalytic</note>
    </ligand>
</feature>
<feature type="binding site" evidence="2">
    <location>
        <position position="685"/>
    </location>
    <ligand>
        <name>Fe cation</name>
        <dbReference type="ChEBI" id="CHEBI:24875"/>
        <note>catalytic</note>
    </ligand>
</feature>
<feature type="turn" evidence="8">
    <location>
        <begin position="23"/>
        <end position="25"/>
    </location>
</feature>
<feature type="helix" evidence="8">
    <location>
        <begin position="26"/>
        <end position="28"/>
    </location>
</feature>
<feature type="helix" evidence="8">
    <location>
        <begin position="33"/>
        <end position="47"/>
    </location>
</feature>
<feature type="helix" evidence="8">
    <location>
        <begin position="55"/>
        <end position="57"/>
    </location>
</feature>
<feature type="helix" evidence="8">
    <location>
        <begin position="60"/>
        <end position="76"/>
    </location>
</feature>
<feature type="strand" evidence="8">
    <location>
        <begin position="79"/>
        <end position="81"/>
    </location>
</feature>
<feature type="strand" evidence="8">
    <location>
        <begin position="91"/>
        <end position="94"/>
    </location>
</feature>
<feature type="helix" evidence="8">
    <location>
        <begin position="97"/>
        <end position="99"/>
    </location>
</feature>
<feature type="helix" evidence="8">
    <location>
        <begin position="103"/>
        <end position="122"/>
    </location>
</feature>
<feature type="helix" evidence="8">
    <location>
        <begin position="126"/>
        <end position="129"/>
    </location>
</feature>
<feature type="turn" evidence="8">
    <location>
        <begin position="130"/>
        <end position="132"/>
    </location>
</feature>
<feature type="helix" evidence="8">
    <location>
        <begin position="133"/>
        <end position="159"/>
    </location>
</feature>
<feature type="helix" evidence="8">
    <location>
        <begin position="161"/>
        <end position="166"/>
    </location>
</feature>
<feature type="helix" evidence="8">
    <location>
        <begin position="168"/>
        <end position="199"/>
    </location>
</feature>
<feature type="helix" evidence="8">
    <location>
        <begin position="210"/>
        <end position="214"/>
    </location>
</feature>
<feature type="turn" evidence="8">
    <location>
        <begin position="215"/>
        <end position="218"/>
    </location>
</feature>
<feature type="helix" evidence="8">
    <location>
        <begin position="224"/>
        <end position="227"/>
    </location>
</feature>
<feature type="helix" evidence="8">
    <location>
        <begin position="231"/>
        <end position="240"/>
    </location>
</feature>
<feature type="helix" evidence="8">
    <location>
        <begin position="261"/>
        <end position="268"/>
    </location>
</feature>
<feature type="helix" evidence="8">
    <location>
        <begin position="274"/>
        <end position="279"/>
    </location>
</feature>
<feature type="strand" evidence="8">
    <location>
        <begin position="283"/>
        <end position="287"/>
    </location>
</feature>
<feature type="helix" evidence="8">
    <location>
        <begin position="289"/>
        <end position="294"/>
    </location>
</feature>
<feature type="strand" evidence="8">
    <location>
        <begin position="300"/>
        <end position="302"/>
    </location>
</feature>
<feature type="turn" evidence="8">
    <location>
        <begin position="303"/>
        <end position="305"/>
    </location>
</feature>
<feature type="strand" evidence="8">
    <location>
        <begin position="306"/>
        <end position="309"/>
    </location>
</feature>
<feature type="strand" evidence="8">
    <location>
        <begin position="314"/>
        <end position="319"/>
    </location>
</feature>
<feature type="strand" evidence="8">
    <location>
        <begin position="326"/>
        <end position="335"/>
    </location>
</feature>
<feature type="turn" evidence="8">
    <location>
        <begin position="337"/>
        <end position="339"/>
    </location>
</feature>
<feature type="strand" evidence="8">
    <location>
        <begin position="342"/>
        <end position="344"/>
    </location>
</feature>
<feature type="helix" evidence="8">
    <location>
        <begin position="351"/>
        <end position="374"/>
    </location>
</feature>
<feature type="helix" evidence="8">
    <location>
        <begin position="375"/>
        <end position="381"/>
    </location>
</feature>
<feature type="helix" evidence="8">
    <location>
        <begin position="382"/>
        <end position="395"/>
    </location>
</feature>
<feature type="helix" evidence="8">
    <location>
        <begin position="401"/>
        <end position="406"/>
    </location>
</feature>
<feature type="helix" evidence="8">
    <location>
        <begin position="407"/>
        <end position="410"/>
    </location>
</feature>
<feature type="helix" evidence="8">
    <location>
        <begin position="413"/>
        <end position="423"/>
    </location>
</feature>
<feature type="helix" evidence="8">
    <location>
        <begin position="430"/>
        <end position="434"/>
    </location>
</feature>
<feature type="strand" evidence="8">
    <location>
        <begin position="435"/>
        <end position="437"/>
    </location>
</feature>
<feature type="helix" evidence="8">
    <location>
        <begin position="439"/>
        <end position="452"/>
    </location>
</feature>
<feature type="turn" evidence="8">
    <location>
        <begin position="455"/>
        <end position="458"/>
    </location>
</feature>
<feature type="helix" evidence="8">
    <location>
        <begin position="460"/>
        <end position="466"/>
    </location>
</feature>
<feature type="turn" evidence="8">
    <location>
        <begin position="472"/>
        <end position="474"/>
    </location>
</feature>
<feature type="helix" evidence="8">
    <location>
        <begin position="479"/>
        <end position="502"/>
    </location>
</feature>
<feature type="helix" evidence="8">
    <location>
        <begin position="506"/>
        <end position="510"/>
    </location>
</feature>
<feature type="helix" evidence="8">
    <location>
        <begin position="513"/>
        <end position="524"/>
    </location>
</feature>
<feature type="helix" evidence="8">
    <location>
        <begin position="537"/>
        <end position="551"/>
    </location>
</feature>
<feature type="helix" evidence="8">
    <location>
        <begin position="553"/>
        <end position="559"/>
    </location>
</feature>
<feature type="helix" evidence="8">
    <location>
        <begin position="562"/>
        <end position="565"/>
    </location>
</feature>
<feature type="strand" evidence="8">
    <location>
        <begin position="566"/>
        <end position="568"/>
    </location>
</feature>
<feature type="turn" evidence="8">
    <location>
        <begin position="569"/>
        <end position="571"/>
    </location>
</feature>
<feature type="strand" evidence="8">
    <location>
        <begin position="576"/>
        <end position="578"/>
    </location>
</feature>
<feature type="strand" evidence="8">
    <location>
        <begin position="584"/>
        <end position="586"/>
    </location>
</feature>
<feature type="helix" evidence="8">
    <location>
        <begin position="589"/>
        <end position="593"/>
    </location>
</feature>
<feature type="helix" evidence="8">
    <location>
        <begin position="599"/>
        <end position="612"/>
    </location>
</feature>
<feature type="turn" evidence="8">
    <location>
        <begin position="620"/>
        <end position="622"/>
    </location>
</feature>
<feature type="helix" evidence="8">
    <location>
        <begin position="637"/>
        <end position="640"/>
    </location>
</feature>
<feature type="helix" evidence="8">
    <location>
        <begin position="645"/>
        <end position="666"/>
    </location>
</feature>
<feature type="strand" evidence="8">
    <location>
        <begin position="667"/>
        <end position="669"/>
    </location>
</feature>
<feature type="helix" evidence="8">
    <location>
        <begin position="676"/>
        <end position="678"/>
    </location>
</feature>
<reference key="1">
    <citation type="journal article" date="2005" name="Antonie Van Leeuwenhoek">
        <title>Cloning and expression of a lipoxygenase from Pseudomonas aeruginosa 42A2.</title>
        <authorList>
            <person name="Vidal-Mas J."/>
            <person name="Busquets M."/>
            <person name="Manresa A."/>
        </authorList>
    </citation>
    <scope>NUCLEOTIDE SEQUENCE [GENOMIC DNA]</scope>
    <scope>FUNCTION</scope>
    <scope>CATALYTIC ACTIVITY</scope>
    <scope>SUBSTRATE SPECIFICITY</scope>
    <source>
        <strain>42A2 / NCIMB 40045</strain>
    </source>
</reference>
<reference key="2">
    <citation type="submission" date="2010-01" db="EMBL/GenBank/DDBJ databases">
        <authorList>
            <person name="Vidal-Mas J."/>
            <person name="Besumbes O."/>
            <person name="Manresa M."/>
            <person name="Busquets M."/>
        </authorList>
    </citation>
    <scope>SEQUENCE REVISION</scope>
</reference>
<reference key="3">
    <citation type="journal article" date="2004" name="Antonie Van Leeuwenhoek">
        <title>Isolation and characterization of a lipoxygenase from Pseudomonas 42A2 responsible for the biotransformation of oleic acid into (S)-(E)-10-hydroxy-8-octadecenoic acid.</title>
        <authorList>
            <person name="Busquets M."/>
            <person name="Deroncele V."/>
            <person name="Vidal-Mas J."/>
            <person name="Rodriguez E."/>
            <person name="Guerrero A."/>
            <person name="Manresa A."/>
        </authorList>
    </citation>
    <scope>FUNCTION</scope>
    <scope>CATALYTIC ACTIVITY</scope>
    <scope>SUBSTRATE SPECIFICITY</scope>
    <scope>COFACTOR</scope>
    <scope>BIOPHYSICOCHEMICAL PROPERTIES</scope>
    <scope>SUBUNIT</scope>
    <scope>SUBCELLULAR LOCATION</scope>
    <source>
        <strain>42A2 / NCIMB 40045</strain>
    </source>
</reference>
<reference key="4">
    <citation type="thesis" date="2005" institute="University of Barcelona" country="Spain">
        <title>Cloning, expression and characterization of the lipoxygenase of Pseudomonas aeruginosa 42A2.</title>
        <authorList>
            <person name="Vidal-Mas J."/>
        </authorList>
    </citation>
    <scope>FUNCTION</scope>
    <scope>CATALYTIC ACTIVITY</scope>
    <scope>BIOPHYSICOCHEMICAL PROPERTIES</scope>
    <source>
        <strain>42A2 / NCIMB 40045</strain>
    </source>
</reference>
<name>LOX_PSEAI</name>
<proteinExistence type="evidence at protein level"/>
<gene>
    <name type="primary">lox</name>
</gene>
<protein>
    <recommendedName>
        <fullName>Linoleate 9/13-lipoxygenase</fullName>
        <ecNumber evidence="5">1.13.11.12</ecNumber>
        <ecNumber evidence="3 4 5">1.13.11.58</ecNumber>
    </recommendedName>
    <alternativeName>
        <fullName>Oleate 10S-lipoxygenase</fullName>
        <ecNumber evidence="3 4 5">1.13.11.77</ecNumber>
    </alternativeName>
</protein>
<keyword id="KW-0002">3D-structure</keyword>
<keyword id="KW-0223">Dioxygenase</keyword>
<keyword id="KW-0408">Iron</keyword>
<keyword id="KW-0479">Metal-binding</keyword>
<keyword id="KW-0560">Oxidoreductase</keyword>
<keyword id="KW-0574">Periplasm</keyword>
<keyword id="KW-0732">Signal</keyword>
<evidence type="ECO:0000255" key="1"/>
<evidence type="ECO:0000255" key="2">
    <source>
        <dbReference type="PROSITE-ProRule" id="PRU00726"/>
    </source>
</evidence>
<evidence type="ECO:0000269" key="3">
    <source>
    </source>
</evidence>
<evidence type="ECO:0000269" key="4">
    <source>
    </source>
</evidence>
<evidence type="ECO:0000269" key="5">
    <source ref="4"/>
</evidence>
<evidence type="ECO:0000305" key="6"/>
<evidence type="ECO:0000305" key="7">
    <source>
    </source>
</evidence>
<evidence type="ECO:0007829" key="8">
    <source>
        <dbReference type="PDB" id="4RPE"/>
    </source>
</evidence>
<comment type="function">
    <text evidence="3 4 5">In presence of oxygen, converts linoleate into (9S)-hydroperoxy-10,12-octadecenoate (9HPOD), which spontaneously decomposes to the corresponding 9-hydroxy-10,12-octadecenoate (9HOD), and into 13-hydroperoxy-9,11-octadecenoate (13HPOD) which spontaneously decomposes to the corresponding 13-hydroxy-9,11-octadecenoate (13HOD). Also active on linolenate. To a lesser extent, is also able to convert oleate into (10S)-hydroperoxy-8E-octadecenoate, which spontaneously decomposes to the corresponding 10-hydroxy-8E-octadecenoate. Is almost not active on arachidonate.</text>
</comment>
<comment type="catalytic activity">
    <reaction evidence="3 4 5">
        <text>(9Z,12Z)-octadecadienoate + O2 = (9S)-hydroperoxy-(10E,12Z)-octadecadienoate</text>
        <dbReference type="Rhea" id="RHEA:30291"/>
        <dbReference type="ChEBI" id="CHEBI:15379"/>
        <dbReference type="ChEBI" id="CHEBI:30245"/>
        <dbReference type="ChEBI" id="CHEBI:60955"/>
        <dbReference type="EC" id="1.13.11.58"/>
    </reaction>
</comment>
<comment type="catalytic activity">
    <reaction evidence="3 4 5">
        <text>(9Z)-octadecenoate + O2 = (8E,10S)-10-hydroperoxy-octadeca-8-enoate</text>
        <dbReference type="Rhea" id="RHEA:37907"/>
        <dbReference type="ChEBI" id="CHEBI:15379"/>
        <dbReference type="ChEBI" id="CHEBI:30823"/>
        <dbReference type="ChEBI" id="CHEBI:75341"/>
        <dbReference type="EC" id="1.13.11.77"/>
    </reaction>
</comment>
<comment type="catalytic activity">
    <reaction evidence="3 4 5">
        <text>(9Z,12Z)-octadecadienoate + O2 = (8E,10S,12Z)-10-hydroperoxyoctadeca-8,12-dienoate</text>
        <dbReference type="Rhea" id="RHEA:37919"/>
        <dbReference type="ChEBI" id="CHEBI:15379"/>
        <dbReference type="ChEBI" id="CHEBI:30245"/>
        <dbReference type="ChEBI" id="CHEBI:75346"/>
        <dbReference type="EC" id="1.13.11.77"/>
    </reaction>
</comment>
<comment type="catalytic activity">
    <reaction evidence="3 4 5">
        <text>(9Z,12Z,15Z)-octadecatrienoate + O2 = (8E,10S,12Z,15Z)-10-hydroperoxyoctadeca-8,12,15-trienoate</text>
        <dbReference type="Rhea" id="RHEA:37923"/>
        <dbReference type="ChEBI" id="CHEBI:15379"/>
        <dbReference type="ChEBI" id="CHEBI:32387"/>
        <dbReference type="ChEBI" id="CHEBI:75348"/>
        <dbReference type="EC" id="1.13.11.77"/>
    </reaction>
</comment>
<comment type="catalytic activity">
    <reaction evidence="5">
        <text>(9Z,12Z)-octadecadienoate + O2 = (13S)-hydroperoxy-(9Z,11E)-octadecadienoate</text>
        <dbReference type="Rhea" id="RHEA:22780"/>
        <dbReference type="ChEBI" id="CHEBI:15379"/>
        <dbReference type="ChEBI" id="CHEBI:30245"/>
        <dbReference type="ChEBI" id="CHEBI:57466"/>
        <dbReference type="EC" id="1.13.11.12"/>
    </reaction>
</comment>
<comment type="catalytic activity">
    <reaction evidence="5">
        <text>(9Z,12Z,15Z)-octadecatrienoate + O2 = (13S)-hydroperoxy-(9Z,11E,15Z)-octadecatrienoate</text>
        <dbReference type="Rhea" id="RHEA:34495"/>
        <dbReference type="ChEBI" id="CHEBI:15379"/>
        <dbReference type="ChEBI" id="CHEBI:32387"/>
        <dbReference type="ChEBI" id="CHEBI:58757"/>
        <dbReference type="EC" id="1.13.11.12"/>
    </reaction>
</comment>
<comment type="cofactor">
    <cofactor evidence="7">
        <name>Fe cation</name>
        <dbReference type="ChEBI" id="CHEBI:24875"/>
    </cofactor>
    <text evidence="7">Binds 1 Fe cation per subunit.</text>
</comment>
<comment type="activity regulation">
    <text>Inhibited by Ba(2+), Zn(2+) and Fe(3+).</text>
</comment>
<comment type="biophysicochemical properties">
    <kinetics>
        <KM evidence="3 5">78.9 uM for linoleate (Ref.4)</KM>
        <KM evidence="3 5">0.74 mM for oleate</KM>
        <KM evidence="3 5">0.66 mM for linoleate</KM>
        <KM evidence="3 5">0.73 mM for linolenate</KM>
        <Vmax evidence="3 5">0.246 umol/min/mg enzyme with oleate as substrate</Vmax>
        <Vmax evidence="3 5">81.75 umol/min/mg enzyme with linoleate as substrate (Ref.4)</Vmax>
        <text>kcat is 96 sec(-1) with linoleate as substrate (Ref.4).</text>
    </kinetics>
    <phDependence>
        <text evidence="3 5">Optimum pH is 7 with linoleate as substrate, and 8.5-9.0 with oleate as substrate.</text>
    </phDependence>
    <temperatureDependence>
        <text evidence="3 5">Optimum temperature is 25-30 degrees Celsius. Active up to 45 degrees Celsius, less active after 50 degrees Celsius and completely inactive at 70 degrees Celsius.</text>
    </temperatureDependence>
</comment>
<comment type="subunit">
    <text evidence="3">Monomer.</text>
</comment>
<comment type="subcellular location">
    <subcellularLocation>
        <location evidence="2 3">Periplasm</location>
    </subcellularLocation>
</comment>
<comment type="miscellaneous">
    <text>In vitro, under anaerobic conditions, does not transform linoleate or oleate into the corresponding hydroxy derivative.</text>
</comment>
<comment type="similarity">
    <text evidence="6">Belongs to the lipoxygenase family.</text>
</comment>
<comment type="caution">
    <text evidence="6">The biochemical characterization done in PubMed:15028873 is devoted to oleic acid, however, the preferred substrate of the enzyme is linoleic acid.</text>
</comment>
<sequence length="685" mass="74519">MKRRSVLLSGVALSGTALANDSIFFSPLKYLGAEQQRSIDASRSLLDNLIPPSLPQYDNLAGKLARRAVLTSKKLVYVWTENFANVKGVPMARSVPLGELPNVDWLLKTAGVIVELIVNFVASLPASAAAQFERIAAGLSGDLEAARQVHEALLEEAKNDPAAAGSLLLRFTELQTRVIALLTRVGLLVDDILKSASNLVTQGGQGDGLNRFRAVFGTLRLPEVADSFRDDEAFAYWRVAGPNPLLIRRVDALPANFPLGEEQFRRVMGADDSLLEAAASRRLYLLDYAELGKLAPSGAVDKLLTGTGFAYAPIALFALGKDRAGLLPVAIQCGQDPATHPMFVRPAESESDLYWGWQMAKTVVQVAEENYHEMFVHLAQTHLVSEAFCLATQRTLAPSHPLHVLLAPHFEGTLFINEGAARILLPSAGFIDVMFAAPIQDTQATAGGNRLGFDFYRGMLPESLKARNVDDPAALPDYPYRDDGLLVWNAIRQWAADYVAVYYASDGDVTADVELAAWVGEVIGSGKVAGFRPITGRSQLVEVLTMVIFTASAQHAAVNFPQPSMMTYAPAICAMSAAPAPDSPSGKSEADWLKMMPPTLVALEKVNIYHLLGSVYHGRLGDYRQTGFPYAPVFSDRRVTASGGPLERFQARLKEVEATIRTRNQARRKPYEYLLPSRIPASTNI</sequence>
<accession>Q8RNT4</accession>
<organism>
    <name type="scientific">Pseudomonas aeruginosa</name>
    <dbReference type="NCBI Taxonomy" id="287"/>
    <lineage>
        <taxon>Bacteria</taxon>
        <taxon>Pseudomonadati</taxon>
        <taxon>Pseudomonadota</taxon>
        <taxon>Gammaproteobacteria</taxon>
        <taxon>Pseudomonadales</taxon>
        <taxon>Pseudomonadaceae</taxon>
        <taxon>Pseudomonas</taxon>
    </lineage>
</organism>
<dbReference type="EC" id="1.13.11.12" evidence="5"/>
<dbReference type="EC" id="1.13.11.58" evidence="3 4 5"/>
<dbReference type="EC" id="1.13.11.77" evidence="3 4 5"/>
<dbReference type="EMBL" id="AF479686">
    <property type="protein sequence ID" value="AAL85880.2"/>
    <property type="molecule type" value="Genomic_DNA"/>
</dbReference>
<dbReference type="PDB" id="4G32">
    <property type="method" value="X-ray"/>
    <property type="resolution" value="1.75 A"/>
    <property type="chains" value="A=19-685"/>
</dbReference>
<dbReference type="PDB" id="4G33">
    <property type="method" value="X-ray"/>
    <property type="resolution" value="2.03 A"/>
    <property type="chains" value="A=19-685"/>
</dbReference>
<dbReference type="PDB" id="4RPE">
    <property type="method" value="X-ray"/>
    <property type="resolution" value="1.60 A"/>
    <property type="chains" value="A=19-685"/>
</dbReference>
<dbReference type="PDB" id="5LC8">
    <property type="method" value="X-ray"/>
    <property type="resolution" value="1.80 A"/>
    <property type="chains" value="A=19-685"/>
</dbReference>
<dbReference type="PDBsum" id="4G32"/>
<dbReference type="PDBsum" id="4G33"/>
<dbReference type="PDBsum" id="4RPE"/>
<dbReference type="PDBsum" id="5LC8"/>
<dbReference type="SMR" id="Q8RNT4"/>
<dbReference type="KEGG" id="ag:AAL85880"/>
<dbReference type="eggNOG" id="COG0753">
    <property type="taxonomic scope" value="Bacteria"/>
</dbReference>
<dbReference type="EvolutionaryTrace" id="Q8RNT4"/>
<dbReference type="GO" id="GO:0042597">
    <property type="term" value="C:periplasmic space"/>
    <property type="evidence" value="ECO:0007669"/>
    <property type="project" value="UniProtKB-SubCell"/>
</dbReference>
<dbReference type="GO" id="GO:0016165">
    <property type="term" value="F:linoleate 13S-lipoxygenase activity"/>
    <property type="evidence" value="ECO:0007669"/>
    <property type="project" value="UniProtKB-EC"/>
</dbReference>
<dbReference type="GO" id="GO:1990136">
    <property type="term" value="F:linoleate 9S-lipoxygenase activity"/>
    <property type="evidence" value="ECO:0007669"/>
    <property type="project" value="UniProtKB-EC"/>
</dbReference>
<dbReference type="GO" id="GO:0046872">
    <property type="term" value="F:metal ion binding"/>
    <property type="evidence" value="ECO:0007669"/>
    <property type="project" value="UniProtKB-KW"/>
</dbReference>
<dbReference type="GO" id="GO:0034440">
    <property type="term" value="P:lipid oxidation"/>
    <property type="evidence" value="ECO:0007669"/>
    <property type="project" value="InterPro"/>
</dbReference>
<dbReference type="Gene3D" id="3.10.450.60">
    <property type="match status" value="1"/>
</dbReference>
<dbReference type="Gene3D" id="1.20.245.10">
    <property type="entry name" value="Lipoxygenase-1, Domain 5"/>
    <property type="match status" value="1"/>
</dbReference>
<dbReference type="InterPro" id="IPR000907">
    <property type="entry name" value="LipOase"/>
</dbReference>
<dbReference type="InterPro" id="IPR013819">
    <property type="entry name" value="LipOase_C"/>
</dbReference>
<dbReference type="InterPro" id="IPR036226">
    <property type="entry name" value="LipOase_C_sf"/>
</dbReference>
<dbReference type="InterPro" id="IPR020834">
    <property type="entry name" value="LipOase_CS"/>
</dbReference>
<dbReference type="InterPro" id="IPR020833">
    <property type="entry name" value="LipOase_Fe_BS"/>
</dbReference>
<dbReference type="PANTHER" id="PTHR11771">
    <property type="entry name" value="LIPOXYGENASE"/>
    <property type="match status" value="1"/>
</dbReference>
<dbReference type="Pfam" id="PF00305">
    <property type="entry name" value="Lipoxygenase"/>
    <property type="match status" value="1"/>
</dbReference>
<dbReference type="PRINTS" id="PR00087">
    <property type="entry name" value="LIPOXYGENASE"/>
</dbReference>
<dbReference type="SUPFAM" id="SSF48484">
    <property type="entry name" value="Lipoxigenase"/>
    <property type="match status" value="1"/>
</dbReference>
<dbReference type="PROSITE" id="PS00711">
    <property type="entry name" value="LIPOXYGENASE_1"/>
    <property type="match status" value="1"/>
</dbReference>
<dbReference type="PROSITE" id="PS00081">
    <property type="entry name" value="LIPOXYGENASE_2"/>
    <property type="match status" value="1"/>
</dbReference>
<dbReference type="PROSITE" id="PS51393">
    <property type="entry name" value="LIPOXYGENASE_3"/>
    <property type="match status" value="1"/>
</dbReference>